<keyword id="KW-0320">Glycogen biosynthesis</keyword>
<keyword id="KW-0328">Glycosyltransferase</keyword>
<keyword id="KW-1185">Reference proteome</keyword>
<keyword id="KW-0808">Transferase</keyword>
<accession>A7MGE0</accession>
<comment type="function">
    <text evidence="1">Synthesizes alpha-1,4-glucan chains using ADP-glucose.</text>
</comment>
<comment type="catalytic activity">
    <reaction evidence="1">
        <text>[(1-&gt;4)-alpha-D-glucosyl](n) + ADP-alpha-D-glucose = [(1-&gt;4)-alpha-D-glucosyl](n+1) + ADP + H(+)</text>
        <dbReference type="Rhea" id="RHEA:18189"/>
        <dbReference type="Rhea" id="RHEA-COMP:9584"/>
        <dbReference type="Rhea" id="RHEA-COMP:9587"/>
        <dbReference type="ChEBI" id="CHEBI:15378"/>
        <dbReference type="ChEBI" id="CHEBI:15444"/>
        <dbReference type="ChEBI" id="CHEBI:57498"/>
        <dbReference type="ChEBI" id="CHEBI:456216"/>
        <dbReference type="EC" id="2.4.1.21"/>
    </reaction>
</comment>
<comment type="pathway">
    <text evidence="1">Glycan biosynthesis; glycogen biosynthesis.</text>
</comment>
<comment type="similarity">
    <text evidence="1">Belongs to the glycosyltransferase 1 family. Bacterial/plant glycogen synthase subfamily.</text>
</comment>
<feature type="chain" id="PRO_1000014354" description="Glycogen synthase">
    <location>
        <begin position="1"/>
        <end position="477"/>
    </location>
</feature>
<feature type="binding site" evidence="1">
    <location>
        <position position="15"/>
    </location>
    <ligand>
        <name>ADP-alpha-D-glucose</name>
        <dbReference type="ChEBI" id="CHEBI:57498"/>
    </ligand>
</feature>
<name>GLGA_CROS8</name>
<proteinExistence type="inferred from homology"/>
<dbReference type="EC" id="2.4.1.21" evidence="1"/>
<dbReference type="EMBL" id="CP000783">
    <property type="protein sequence ID" value="ABU79491.1"/>
    <property type="molecule type" value="Genomic_DNA"/>
</dbReference>
<dbReference type="RefSeq" id="WP_004388021.1">
    <property type="nucleotide sequence ID" value="NC_009778.1"/>
</dbReference>
<dbReference type="SMR" id="A7MGE0"/>
<dbReference type="CAZy" id="GT5">
    <property type="family name" value="Glycosyltransferase Family 5"/>
</dbReference>
<dbReference type="GeneID" id="56732913"/>
<dbReference type="KEGG" id="esa:ESA_04312"/>
<dbReference type="HOGENOM" id="CLU_009583_18_2_6"/>
<dbReference type="UniPathway" id="UPA00164"/>
<dbReference type="Proteomes" id="UP000000260">
    <property type="component" value="Chromosome"/>
</dbReference>
<dbReference type="GO" id="GO:0005829">
    <property type="term" value="C:cytosol"/>
    <property type="evidence" value="ECO:0007669"/>
    <property type="project" value="TreeGrafter"/>
</dbReference>
<dbReference type="GO" id="GO:0009011">
    <property type="term" value="F:alpha-1,4-glucan glucosyltransferase (ADP-glucose donor) activity"/>
    <property type="evidence" value="ECO:0007669"/>
    <property type="project" value="UniProtKB-UniRule"/>
</dbReference>
<dbReference type="GO" id="GO:0004373">
    <property type="term" value="F:alpha-1,4-glucan glucosyltransferase (UDP-glucose donor) activity"/>
    <property type="evidence" value="ECO:0007669"/>
    <property type="project" value="InterPro"/>
</dbReference>
<dbReference type="GO" id="GO:0005978">
    <property type="term" value="P:glycogen biosynthetic process"/>
    <property type="evidence" value="ECO:0007669"/>
    <property type="project" value="UniProtKB-UniRule"/>
</dbReference>
<dbReference type="CDD" id="cd03791">
    <property type="entry name" value="GT5_Glycogen_synthase_DULL1-like"/>
    <property type="match status" value="1"/>
</dbReference>
<dbReference type="FunFam" id="3.40.50.2000:FF:000011">
    <property type="entry name" value="Glycogen synthase"/>
    <property type="match status" value="1"/>
</dbReference>
<dbReference type="Gene3D" id="3.40.50.2000">
    <property type="entry name" value="Glycogen Phosphorylase B"/>
    <property type="match status" value="2"/>
</dbReference>
<dbReference type="HAMAP" id="MF_00484">
    <property type="entry name" value="Glycogen_synth"/>
    <property type="match status" value="1"/>
</dbReference>
<dbReference type="InterPro" id="IPR001296">
    <property type="entry name" value="Glyco_trans_1"/>
</dbReference>
<dbReference type="InterPro" id="IPR011835">
    <property type="entry name" value="GS/SS"/>
</dbReference>
<dbReference type="InterPro" id="IPR013534">
    <property type="entry name" value="Starch_synth_cat_dom"/>
</dbReference>
<dbReference type="NCBIfam" id="TIGR02095">
    <property type="entry name" value="glgA"/>
    <property type="match status" value="1"/>
</dbReference>
<dbReference type="NCBIfam" id="NF001899">
    <property type="entry name" value="PRK00654.1-2"/>
    <property type="match status" value="1"/>
</dbReference>
<dbReference type="PANTHER" id="PTHR45825:SF11">
    <property type="entry name" value="ALPHA AMYLASE DOMAIN-CONTAINING PROTEIN"/>
    <property type="match status" value="1"/>
</dbReference>
<dbReference type="PANTHER" id="PTHR45825">
    <property type="entry name" value="GRANULE-BOUND STARCH SYNTHASE 1, CHLOROPLASTIC/AMYLOPLASTIC"/>
    <property type="match status" value="1"/>
</dbReference>
<dbReference type="Pfam" id="PF08323">
    <property type="entry name" value="Glyco_transf_5"/>
    <property type="match status" value="1"/>
</dbReference>
<dbReference type="Pfam" id="PF00534">
    <property type="entry name" value="Glycos_transf_1"/>
    <property type="match status" value="1"/>
</dbReference>
<dbReference type="SUPFAM" id="SSF53756">
    <property type="entry name" value="UDP-Glycosyltransferase/glycogen phosphorylase"/>
    <property type="match status" value="1"/>
</dbReference>
<sequence>MQVLHVCSELFPLLKTGGLADVLGALPAAQIAEGVDTRVLLPGFPDLRRGVADAKVITRRDTFAGRISLLYGHFNGVGIYLIDAPHLYDRPGSPYHDTNLYAYADNVIRFALLGWVGSEMAAGLDPFWRPDIVHAHDWHAGLTPAYLAARGRPAKSVFTVHNLAYKGMFYAHHMDEIGLPWSMFNMNGLEFNGEISFLKAGLYYADHITAVSPTYAREITEPQFAYGLEGLLKQRHSEGRLSGILNGVDENIWNPAHDLLLASRYTRDTLEEKAENKRQLQIAMGLKVNDKVPLFAVVSRLTSQKGLDLVLEALPGLLEQGGQLALLGAGDPVLQEGFLAAAAEHPGQVGVQIGYHEAFSHRIMGGADVILVPSRFEPCGLTQLYGLKYGTLPLVRRTGGLADTVSDSSLENLADGIASGFVFEDSNAWSLLRAIRRAFVLWSRPSLWRFVQRQAMGMDFSWQVAAKSYRELYQRLL</sequence>
<organism>
    <name type="scientific">Cronobacter sakazakii (strain ATCC BAA-894)</name>
    <name type="common">Enterobacter sakazakii</name>
    <dbReference type="NCBI Taxonomy" id="290339"/>
    <lineage>
        <taxon>Bacteria</taxon>
        <taxon>Pseudomonadati</taxon>
        <taxon>Pseudomonadota</taxon>
        <taxon>Gammaproteobacteria</taxon>
        <taxon>Enterobacterales</taxon>
        <taxon>Enterobacteriaceae</taxon>
        <taxon>Cronobacter</taxon>
    </lineage>
</organism>
<evidence type="ECO:0000255" key="1">
    <source>
        <dbReference type="HAMAP-Rule" id="MF_00484"/>
    </source>
</evidence>
<protein>
    <recommendedName>
        <fullName evidence="1">Glycogen synthase</fullName>
        <ecNumber evidence="1">2.4.1.21</ecNumber>
    </recommendedName>
    <alternativeName>
        <fullName evidence="1">Starch [bacterial glycogen] synthase</fullName>
    </alternativeName>
</protein>
<gene>
    <name evidence="1" type="primary">glgA</name>
    <name type="ordered locus">ESA_04312</name>
</gene>
<reference key="1">
    <citation type="journal article" date="2010" name="PLoS ONE">
        <title>Genome sequence of Cronobacter sakazakii BAA-894 and comparative genomic hybridization analysis with other Cronobacter species.</title>
        <authorList>
            <person name="Kucerova E."/>
            <person name="Clifton S.W."/>
            <person name="Xia X.Q."/>
            <person name="Long F."/>
            <person name="Porwollik S."/>
            <person name="Fulton L."/>
            <person name="Fronick C."/>
            <person name="Minx P."/>
            <person name="Kyung K."/>
            <person name="Warren W."/>
            <person name="Fulton R."/>
            <person name="Feng D."/>
            <person name="Wollam A."/>
            <person name="Shah N."/>
            <person name="Bhonagiri V."/>
            <person name="Nash W.E."/>
            <person name="Hallsworth-Pepin K."/>
            <person name="Wilson R.K."/>
            <person name="McClelland M."/>
            <person name="Forsythe S.J."/>
        </authorList>
    </citation>
    <scope>NUCLEOTIDE SEQUENCE [LARGE SCALE GENOMIC DNA]</scope>
    <source>
        <strain>ATCC BAA-894</strain>
    </source>
</reference>